<sequence>MTVSENSVLETEVLVGGSAMPNERPGAMEPQSLTEMPEGFPRRSTVANGVRSRSSRRFFVVGGALLLSSFAIYEMGAVFSIGGITPLEYLVLLLFAINFCWIALAFCSGIAGFLILLRKPKAKDLEVTELHTRTAILMPTYNESPDRVFSAVSVMAEALSQTGHGHAFDWFILSDTTDPEIALLEEQAFLVLRQETHKHSRVYYRRRRKNVARKAGNVADFCRRWGSRYDHLLVLDADSLMESSTITGLAQRMQADPDAGLIQTIPSLINGTTLMARLQQFAARIYGPVIGTGLGWWVQKEGNFWGHNAIIRTEAFMGAAGLPNLKGKPPFGGHILSHDFVEAALIRRAGWSVVIAYDLPGSYEECPPSIVDLAVRDRRWCQGNLQHSRILPTKGLHWVSRLHLLTGIMAYLSSPFWLLLILTGLMLALQAHFIRPEYFTDQFSLFPTWPIMDSDRALRLFYITMGVLFGPKIFGVLLLLKDGQFARSVGGRIKAIFSVLFEVVLSALIAPIMMFIHCGAVMSILMGRDSGWSPQRRDDGSMPWLTLIYRHRWHMLAGVMLGYAAILDSLTLLAWMSPALIGLWFAVPISAWTGSVKIGEVFKRAGILATPEERSPAAICLQAQDARAAYQAHISKPWTLAQLLKDPALMELHLAMVDKQPLRAAGTPIEPVEAIVHVKVHEAQCQESAMALFNRQEMALVLANPLMLRSLQKLPEQFVAEDLVSFC</sequence>
<name>OPGH_SHEPC</name>
<evidence type="ECO:0000255" key="1">
    <source>
        <dbReference type="HAMAP-Rule" id="MF_01072"/>
    </source>
</evidence>
<evidence type="ECO:0000256" key="2">
    <source>
        <dbReference type="SAM" id="MobiDB-lite"/>
    </source>
</evidence>
<accession>A4Y768</accession>
<dbReference type="EC" id="2.4.1.-" evidence="1"/>
<dbReference type="EMBL" id="CP000681">
    <property type="protein sequence ID" value="ABP75801.1"/>
    <property type="molecule type" value="Genomic_DNA"/>
</dbReference>
<dbReference type="STRING" id="319224.Sputcn32_2080"/>
<dbReference type="CAZy" id="GT2">
    <property type="family name" value="Glycosyltransferase Family 2"/>
</dbReference>
<dbReference type="KEGG" id="spc:Sputcn32_2080"/>
<dbReference type="eggNOG" id="COG2943">
    <property type="taxonomic scope" value="Bacteria"/>
</dbReference>
<dbReference type="HOGENOM" id="CLU_015730_1_0_6"/>
<dbReference type="UniPathway" id="UPA00637"/>
<dbReference type="GO" id="GO:0005886">
    <property type="term" value="C:plasma membrane"/>
    <property type="evidence" value="ECO:0007669"/>
    <property type="project" value="UniProtKB-SubCell"/>
</dbReference>
<dbReference type="GO" id="GO:0016758">
    <property type="term" value="F:hexosyltransferase activity"/>
    <property type="evidence" value="ECO:0007669"/>
    <property type="project" value="UniProtKB-UniRule"/>
</dbReference>
<dbReference type="GO" id="GO:0009250">
    <property type="term" value="P:glucan biosynthetic process"/>
    <property type="evidence" value="ECO:0007669"/>
    <property type="project" value="UniProtKB-UniRule"/>
</dbReference>
<dbReference type="CDD" id="cd04191">
    <property type="entry name" value="Glucan_BSP_MdoH"/>
    <property type="match status" value="1"/>
</dbReference>
<dbReference type="FunFam" id="3.90.550.10:FF:000047">
    <property type="entry name" value="Glucans biosynthesis glucosyltransferase H"/>
    <property type="match status" value="1"/>
</dbReference>
<dbReference type="Gene3D" id="3.90.550.10">
    <property type="entry name" value="Spore Coat Polysaccharide Biosynthesis Protein SpsA, Chain A"/>
    <property type="match status" value="1"/>
</dbReference>
<dbReference type="HAMAP" id="MF_01072">
    <property type="entry name" value="MdoH_OpgH"/>
    <property type="match status" value="1"/>
</dbReference>
<dbReference type="InterPro" id="IPR023725">
    <property type="entry name" value="Glucans_biosynth_gluTrFase_H"/>
</dbReference>
<dbReference type="InterPro" id="IPR001173">
    <property type="entry name" value="Glyco_trans_2-like"/>
</dbReference>
<dbReference type="InterPro" id="IPR050321">
    <property type="entry name" value="Glycosyltr_2/OpgH_subfam"/>
</dbReference>
<dbReference type="InterPro" id="IPR029044">
    <property type="entry name" value="Nucleotide-diphossugar_trans"/>
</dbReference>
<dbReference type="NCBIfam" id="NF003956">
    <property type="entry name" value="PRK05454.1-3"/>
    <property type="match status" value="1"/>
</dbReference>
<dbReference type="NCBIfam" id="NF003958">
    <property type="entry name" value="PRK05454.2-1"/>
    <property type="match status" value="1"/>
</dbReference>
<dbReference type="NCBIfam" id="NF003962">
    <property type="entry name" value="PRK05454.2-5"/>
    <property type="match status" value="1"/>
</dbReference>
<dbReference type="PANTHER" id="PTHR43867">
    <property type="entry name" value="CELLULOSE SYNTHASE CATALYTIC SUBUNIT A [UDP-FORMING]"/>
    <property type="match status" value="1"/>
</dbReference>
<dbReference type="PANTHER" id="PTHR43867:SF5">
    <property type="entry name" value="GLUCANS BIOSYNTHESIS GLUCOSYLTRANSFERASE H"/>
    <property type="match status" value="1"/>
</dbReference>
<dbReference type="Pfam" id="PF13632">
    <property type="entry name" value="Glyco_trans_2_3"/>
    <property type="match status" value="1"/>
</dbReference>
<dbReference type="SUPFAM" id="SSF53448">
    <property type="entry name" value="Nucleotide-diphospho-sugar transferases"/>
    <property type="match status" value="1"/>
</dbReference>
<feature type="chain" id="PRO_1000084503" description="Glucans biosynthesis glucosyltransferase H">
    <location>
        <begin position="1"/>
        <end position="727"/>
    </location>
</feature>
<feature type="transmembrane region" description="Helical" evidence="1">
    <location>
        <begin position="58"/>
        <end position="78"/>
    </location>
</feature>
<feature type="transmembrane region" description="Helical" evidence="1">
    <location>
        <begin position="90"/>
        <end position="110"/>
    </location>
</feature>
<feature type="transmembrane region" description="Helical" evidence="1">
    <location>
        <begin position="278"/>
        <end position="298"/>
    </location>
</feature>
<feature type="transmembrane region" description="Helical" evidence="1">
    <location>
        <begin position="408"/>
        <end position="428"/>
    </location>
</feature>
<feature type="transmembrane region" description="Helical" evidence="1">
    <location>
        <begin position="460"/>
        <end position="480"/>
    </location>
</feature>
<feature type="transmembrane region" description="Helical" evidence="1">
    <location>
        <begin position="496"/>
        <end position="516"/>
    </location>
</feature>
<feature type="transmembrane region" description="Helical" evidence="1">
    <location>
        <begin position="572"/>
        <end position="592"/>
    </location>
</feature>
<feature type="region of interest" description="Disordered" evidence="2">
    <location>
        <begin position="18"/>
        <end position="45"/>
    </location>
</feature>
<proteinExistence type="inferred from homology"/>
<reference key="1">
    <citation type="submission" date="2007-04" db="EMBL/GenBank/DDBJ databases">
        <title>Complete sequence of Shewanella putrefaciens CN-32.</title>
        <authorList>
            <consortium name="US DOE Joint Genome Institute"/>
            <person name="Copeland A."/>
            <person name="Lucas S."/>
            <person name="Lapidus A."/>
            <person name="Barry K."/>
            <person name="Detter J.C."/>
            <person name="Glavina del Rio T."/>
            <person name="Hammon N."/>
            <person name="Israni S."/>
            <person name="Dalin E."/>
            <person name="Tice H."/>
            <person name="Pitluck S."/>
            <person name="Chain P."/>
            <person name="Malfatti S."/>
            <person name="Shin M."/>
            <person name="Vergez L."/>
            <person name="Schmutz J."/>
            <person name="Larimer F."/>
            <person name="Land M."/>
            <person name="Hauser L."/>
            <person name="Kyrpides N."/>
            <person name="Mikhailova N."/>
            <person name="Romine M.F."/>
            <person name="Fredrickson J."/>
            <person name="Tiedje J."/>
            <person name="Richardson P."/>
        </authorList>
    </citation>
    <scope>NUCLEOTIDE SEQUENCE [LARGE SCALE GENOMIC DNA]</scope>
    <source>
        <strain>CN-32 / ATCC BAA-453</strain>
    </source>
</reference>
<organism>
    <name type="scientific">Shewanella putrefaciens (strain CN-32 / ATCC BAA-453)</name>
    <dbReference type="NCBI Taxonomy" id="319224"/>
    <lineage>
        <taxon>Bacteria</taxon>
        <taxon>Pseudomonadati</taxon>
        <taxon>Pseudomonadota</taxon>
        <taxon>Gammaproteobacteria</taxon>
        <taxon>Alteromonadales</taxon>
        <taxon>Shewanellaceae</taxon>
        <taxon>Shewanella</taxon>
    </lineage>
</organism>
<protein>
    <recommendedName>
        <fullName evidence="1">Glucans biosynthesis glucosyltransferase H</fullName>
        <ecNumber evidence="1">2.4.1.-</ecNumber>
    </recommendedName>
</protein>
<comment type="function">
    <text evidence="1">Involved in the biosynthesis of osmoregulated periplasmic glucans (OPGs).</text>
</comment>
<comment type="pathway">
    <text evidence="1">Glycan metabolism; osmoregulated periplasmic glucan (OPG) biosynthesis.</text>
</comment>
<comment type="subcellular location">
    <subcellularLocation>
        <location evidence="1">Cell inner membrane</location>
        <topology evidence="1">Multi-pass membrane protein</topology>
    </subcellularLocation>
</comment>
<comment type="similarity">
    <text evidence="1">Belongs to the glycosyltransferase 2 family. OpgH subfamily.</text>
</comment>
<gene>
    <name evidence="1" type="primary">opgH</name>
    <name type="ordered locus">Sputcn32_2080</name>
</gene>
<keyword id="KW-0997">Cell inner membrane</keyword>
<keyword id="KW-1003">Cell membrane</keyword>
<keyword id="KW-0328">Glycosyltransferase</keyword>
<keyword id="KW-0472">Membrane</keyword>
<keyword id="KW-0808">Transferase</keyword>
<keyword id="KW-0812">Transmembrane</keyword>
<keyword id="KW-1133">Transmembrane helix</keyword>